<proteinExistence type="inferred from homology"/>
<protein>
    <recommendedName>
        <fullName evidence="1">Small ribosomal subunit protein uS2</fullName>
    </recommendedName>
    <alternativeName>
        <fullName evidence="2">30S ribosomal protein S2</fullName>
    </alternativeName>
</protein>
<sequence length="260" mass="29613">MAVISMKQLLEAGVHFGHQTRRWNPKMKKYIFTERNGIYIIDLQKTVKKVDEAYNFLKQVSEDGGKVLFVGTKKQAQESIKNEAERAGQFYVNQRWLGGILTNYKTISKRVKRISEIEKMEEDGLFEVLPKKEVVEIKKEYDRLIKFLGGIRDMKSMPQALFVVDPRKERNAIAEARKLHIPIVGIVDTNCDPDEIDYVIPANDDAIRAVKLLTGKMADAVLEGQQGVSNEEVAAEQNIDLNEDEVVEVEEVKETSVESN</sequence>
<keyword id="KW-1185">Reference proteome</keyword>
<keyword id="KW-0687">Ribonucleoprotein</keyword>
<keyword id="KW-0689">Ribosomal protein</keyword>
<organism>
    <name type="scientific">Staphylococcus carnosus (strain TM300)</name>
    <dbReference type="NCBI Taxonomy" id="396513"/>
    <lineage>
        <taxon>Bacteria</taxon>
        <taxon>Bacillati</taxon>
        <taxon>Bacillota</taxon>
        <taxon>Bacilli</taxon>
        <taxon>Bacillales</taxon>
        <taxon>Staphylococcaceae</taxon>
        <taxon>Staphylococcus</taxon>
    </lineage>
</organism>
<comment type="similarity">
    <text evidence="1">Belongs to the universal ribosomal protein uS2 family.</text>
</comment>
<reference key="1">
    <citation type="journal article" date="2009" name="Appl. Environ. Microbiol.">
        <title>Genome analysis of the meat starter culture bacterium Staphylococcus carnosus TM300.</title>
        <authorList>
            <person name="Rosenstein R."/>
            <person name="Nerz C."/>
            <person name="Biswas L."/>
            <person name="Resch A."/>
            <person name="Raddatz G."/>
            <person name="Schuster S.C."/>
            <person name="Goetz F."/>
        </authorList>
    </citation>
    <scope>NUCLEOTIDE SEQUENCE [LARGE SCALE GENOMIC DNA]</scope>
    <source>
        <strain>TM300</strain>
    </source>
</reference>
<accession>B9DPG8</accession>
<evidence type="ECO:0000255" key="1">
    <source>
        <dbReference type="HAMAP-Rule" id="MF_00291"/>
    </source>
</evidence>
<evidence type="ECO:0000305" key="2"/>
<name>RS2_STACT</name>
<gene>
    <name evidence="1" type="primary">rpsB</name>
    <name type="ordered locus">Sca_0891</name>
</gene>
<dbReference type="EMBL" id="AM295250">
    <property type="protein sequence ID" value="CAL27800.1"/>
    <property type="molecule type" value="Genomic_DNA"/>
</dbReference>
<dbReference type="RefSeq" id="WP_015900141.1">
    <property type="nucleotide sequence ID" value="NC_012121.1"/>
</dbReference>
<dbReference type="SMR" id="B9DPG8"/>
<dbReference type="GeneID" id="93793321"/>
<dbReference type="KEGG" id="sca:SCA_0891"/>
<dbReference type="eggNOG" id="COG0052">
    <property type="taxonomic scope" value="Bacteria"/>
</dbReference>
<dbReference type="HOGENOM" id="CLU_040318_1_2_9"/>
<dbReference type="OrthoDB" id="9808036at2"/>
<dbReference type="BioCyc" id="SCAR396513:SCA_RS04495-MONOMER"/>
<dbReference type="Proteomes" id="UP000000444">
    <property type="component" value="Chromosome"/>
</dbReference>
<dbReference type="GO" id="GO:0022627">
    <property type="term" value="C:cytosolic small ribosomal subunit"/>
    <property type="evidence" value="ECO:0007669"/>
    <property type="project" value="TreeGrafter"/>
</dbReference>
<dbReference type="GO" id="GO:0003735">
    <property type="term" value="F:structural constituent of ribosome"/>
    <property type="evidence" value="ECO:0007669"/>
    <property type="project" value="InterPro"/>
</dbReference>
<dbReference type="GO" id="GO:0006412">
    <property type="term" value="P:translation"/>
    <property type="evidence" value="ECO:0007669"/>
    <property type="project" value="UniProtKB-UniRule"/>
</dbReference>
<dbReference type="CDD" id="cd01425">
    <property type="entry name" value="RPS2"/>
    <property type="match status" value="1"/>
</dbReference>
<dbReference type="FunFam" id="1.10.287.610:FF:000001">
    <property type="entry name" value="30S ribosomal protein S2"/>
    <property type="match status" value="1"/>
</dbReference>
<dbReference type="Gene3D" id="3.40.50.10490">
    <property type="entry name" value="Glucose-6-phosphate isomerase like protein, domain 1"/>
    <property type="match status" value="1"/>
</dbReference>
<dbReference type="Gene3D" id="1.10.287.610">
    <property type="entry name" value="Helix hairpin bin"/>
    <property type="match status" value="1"/>
</dbReference>
<dbReference type="HAMAP" id="MF_00291_B">
    <property type="entry name" value="Ribosomal_uS2_B"/>
    <property type="match status" value="1"/>
</dbReference>
<dbReference type="InterPro" id="IPR001865">
    <property type="entry name" value="Ribosomal_uS2"/>
</dbReference>
<dbReference type="InterPro" id="IPR005706">
    <property type="entry name" value="Ribosomal_uS2_bac/mit/plastid"/>
</dbReference>
<dbReference type="InterPro" id="IPR018130">
    <property type="entry name" value="Ribosomal_uS2_CS"/>
</dbReference>
<dbReference type="InterPro" id="IPR023591">
    <property type="entry name" value="Ribosomal_uS2_flav_dom_sf"/>
</dbReference>
<dbReference type="NCBIfam" id="TIGR01011">
    <property type="entry name" value="rpsB_bact"/>
    <property type="match status" value="1"/>
</dbReference>
<dbReference type="PANTHER" id="PTHR12534">
    <property type="entry name" value="30S RIBOSOMAL PROTEIN S2 PROKARYOTIC AND ORGANELLAR"/>
    <property type="match status" value="1"/>
</dbReference>
<dbReference type="PANTHER" id="PTHR12534:SF0">
    <property type="entry name" value="SMALL RIBOSOMAL SUBUNIT PROTEIN US2M"/>
    <property type="match status" value="1"/>
</dbReference>
<dbReference type="Pfam" id="PF00318">
    <property type="entry name" value="Ribosomal_S2"/>
    <property type="match status" value="1"/>
</dbReference>
<dbReference type="PRINTS" id="PR00395">
    <property type="entry name" value="RIBOSOMALS2"/>
</dbReference>
<dbReference type="SUPFAM" id="SSF52313">
    <property type="entry name" value="Ribosomal protein S2"/>
    <property type="match status" value="1"/>
</dbReference>
<dbReference type="PROSITE" id="PS00962">
    <property type="entry name" value="RIBOSOMAL_S2_1"/>
    <property type="match status" value="1"/>
</dbReference>
<dbReference type="PROSITE" id="PS00963">
    <property type="entry name" value="RIBOSOMAL_S2_2"/>
    <property type="match status" value="1"/>
</dbReference>
<feature type="chain" id="PRO_1000194345" description="Small ribosomal subunit protein uS2">
    <location>
        <begin position="1"/>
        <end position="260"/>
    </location>
</feature>